<feature type="chain" id="PRO_1000121824" description="Large ribosomal subunit protein uL29">
    <location>
        <begin position="1"/>
        <end position="68"/>
    </location>
</feature>
<protein>
    <recommendedName>
        <fullName evidence="1">Large ribosomal subunit protein uL29</fullName>
    </recommendedName>
    <alternativeName>
        <fullName evidence="2">50S ribosomal protein L29</fullName>
    </alternativeName>
</protein>
<gene>
    <name evidence="1" type="primary">rpmC</name>
    <name type="ordered locus">SPH_0331</name>
</gene>
<organism>
    <name type="scientific">Streptococcus pneumoniae (strain Hungary19A-6)</name>
    <dbReference type="NCBI Taxonomy" id="487214"/>
    <lineage>
        <taxon>Bacteria</taxon>
        <taxon>Bacillati</taxon>
        <taxon>Bacillota</taxon>
        <taxon>Bacilli</taxon>
        <taxon>Lactobacillales</taxon>
        <taxon>Streptococcaceae</taxon>
        <taxon>Streptococcus</taxon>
    </lineage>
</organism>
<dbReference type="EMBL" id="CP000936">
    <property type="protein sequence ID" value="ACA36519.1"/>
    <property type="molecule type" value="Genomic_DNA"/>
</dbReference>
<dbReference type="RefSeq" id="WP_000772918.1">
    <property type="nucleotide sequence ID" value="NC_010380.1"/>
</dbReference>
<dbReference type="SMR" id="B1I8K6"/>
<dbReference type="GeneID" id="93738965"/>
<dbReference type="KEGG" id="spv:SPH_0331"/>
<dbReference type="HOGENOM" id="CLU_158491_5_2_9"/>
<dbReference type="Proteomes" id="UP000002163">
    <property type="component" value="Chromosome"/>
</dbReference>
<dbReference type="GO" id="GO:0022625">
    <property type="term" value="C:cytosolic large ribosomal subunit"/>
    <property type="evidence" value="ECO:0007669"/>
    <property type="project" value="TreeGrafter"/>
</dbReference>
<dbReference type="GO" id="GO:0003735">
    <property type="term" value="F:structural constituent of ribosome"/>
    <property type="evidence" value="ECO:0007669"/>
    <property type="project" value="InterPro"/>
</dbReference>
<dbReference type="GO" id="GO:0006412">
    <property type="term" value="P:translation"/>
    <property type="evidence" value="ECO:0007669"/>
    <property type="project" value="UniProtKB-UniRule"/>
</dbReference>
<dbReference type="CDD" id="cd00427">
    <property type="entry name" value="Ribosomal_L29_HIP"/>
    <property type="match status" value="1"/>
</dbReference>
<dbReference type="FunFam" id="1.10.287.310:FF:000001">
    <property type="entry name" value="50S ribosomal protein L29"/>
    <property type="match status" value="1"/>
</dbReference>
<dbReference type="Gene3D" id="1.10.287.310">
    <property type="match status" value="1"/>
</dbReference>
<dbReference type="HAMAP" id="MF_00374">
    <property type="entry name" value="Ribosomal_uL29"/>
    <property type="match status" value="1"/>
</dbReference>
<dbReference type="InterPro" id="IPR050063">
    <property type="entry name" value="Ribosomal_protein_uL29"/>
</dbReference>
<dbReference type="InterPro" id="IPR001854">
    <property type="entry name" value="Ribosomal_uL29"/>
</dbReference>
<dbReference type="InterPro" id="IPR018254">
    <property type="entry name" value="Ribosomal_uL29_CS"/>
</dbReference>
<dbReference type="InterPro" id="IPR036049">
    <property type="entry name" value="Ribosomal_uL29_sf"/>
</dbReference>
<dbReference type="NCBIfam" id="TIGR00012">
    <property type="entry name" value="L29"/>
    <property type="match status" value="1"/>
</dbReference>
<dbReference type="PANTHER" id="PTHR10916">
    <property type="entry name" value="60S RIBOSOMAL PROTEIN L35/50S RIBOSOMAL PROTEIN L29"/>
    <property type="match status" value="1"/>
</dbReference>
<dbReference type="PANTHER" id="PTHR10916:SF0">
    <property type="entry name" value="LARGE RIBOSOMAL SUBUNIT PROTEIN UL29C"/>
    <property type="match status" value="1"/>
</dbReference>
<dbReference type="Pfam" id="PF00831">
    <property type="entry name" value="Ribosomal_L29"/>
    <property type="match status" value="1"/>
</dbReference>
<dbReference type="SUPFAM" id="SSF46561">
    <property type="entry name" value="Ribosomal protein L29 (L29p)"/>
    <property type="match status" value="1"/>
</dbReference>
<dbReference type="PROSITE" id="PS00579">
    <property type="entry name" value="RIBOSOMAL_L29"/>
    <property type="match status" value="1"/>
</dbReference>
<reference key="1">
    <citation type="journal article" date="2010" name="Genome Biol.">
        <title>Structure and dynamics of the pan-genome of Streptococcus pneumoniae and closely related species.</title>
        <authorList>
            <person name="Donati C."/>
            <person name="Hiller N.L."/>
            <person name="Tettelin H."/>
            <person name="Muzzi A."/>
            <person name="Croucher N.J."/>
            <person name="Angiuoli S.V."/>
            <person name="Oggioni M."/>
            <person name="Dunning Hotopp J.C."/>
            <person name="Hu F.Z."/>
            <person name="Riley D.R."/>
            <person name="Covacci A."/>
            <person name="Mitchell T.J."/>
            <person name="Bentley S.D."/>
            <person name="Kilian M."/>
            <person name="Ehrlich G.D."/>
            <person name="Rappuoli R."/>
            <person name="Moxon E.R."/>
            <person name="Masignani V."/>
        </authorList>
    </citation>
    <scope>NUCLEOTIDE SEQUENCE [LARGE SCALE GENOMIC DNA]</scope>
    <source>
        <strain>Hungary19A-6</strain>
    </source>
</reference>
<name>RL29_STRPI</name>
<sequence>MKLNEVKEFVKELRGLSQEELAKRENELKKELFELRFQAATGQLEQTARLKEVKKQIARIKTVQSEAK</sequence>
<keyword id="KW-0687">Ribonucleoprotein</keyword>
<keyword id="KW-0689">Ribosomal protein</keyword>
<proteinExistence type="inferred from homology"/>
<comment type="similarity">
    <text evidence="1">Belongs to the universal ribosomal protein uL29 family.</text>
</comment>
<accession>B1I8K6</accession>
<evidence type="ECO:0000255" key="1">
    <source>
        <dbReference type="HAMAP-Rule" id="MF_00374"/>
    </source>
</evidence>
<evidence type="ECO:0000305" key="2"/>